<reference key="1">
    <citation type="journal article" date="2011" name="Stand. Genomic Sci.">
        <title>Complete genome sequence of the halophilic and highly halotolerant Chromohalobacter salexigens type strain (1H11(T)).</title>
        <authorList>
            <person name="Copeland A."/>
            <person name="O'Connor K."/>
            <person name="Lucas S."/>
            <person name="Lapidus A."/>
            <person name="Berry K.W."/>
            <person name="Detter J.C."/>
            <person name="Del Rio T.G."/>
            <person name="Hammon N."/>
            <person name="Dalin E."/>
            <person name="Tice H."/>
            <person name="Pitluck S."/>
            <person name="Bruce D."/>
            <person name="Goodwin L."/>
            <person name="Han C."/>
            <person name="Tapia R."/>
            <person name="Saunders E."/>
            <person name="Schmutz J."/>
            <person name="Brettin T."/>
            <person name="Larimer F."/>
            <person name="Land M."/>
            <person name="Hauser L."/>
            <person name="Vargas C."/>
            <person name="Nieto J.J."/>
            <person name="Kyrpides N.C."/>
            <person name="Ivanova N."/>
            <person name="Goker M."/>
            <person name="Klenk H.P."/>
            <person name="Csonka L.N."/>
            <person name="Woyke T."/>
        </authorList>
    </citation>
    <scope>NUCLEOTIDE SEQUENCE [LARGE SCALE GENOMIC DNA]</scope>
    <source>
        <strain>ATCC BAA-138 / DSM 3043 / CIP 106854 / NCIMB 13768 / 1H11</strain>
    </source>
</reference>
<dbReference type="EMBL" id="CP000285">
    <property type="protein sequence ID" value="ABE57800.1"/>
    <property type="molecule type" value="Genomic_DNA"/>
</dbReference>
<dbReference type="RefSeq" id="WP_011505746.1">
    <property type="nucleotide sequence ID" value="NC_007963.1"/>
</dbReference>
<dbReference type="SMR" id="Q1R0F8"/>
<dbReference type="STRING" id="290398.Csal_0438"/>
<dbReference type="GeneID" id="95333191"/>
<dbReference type="KEGG" id="csa:Csal_0438"/>
<dbReference type="eggNOG" id="COG0098">
    <property type="taxonomic scope" value="Bacteria"/>
</dbReference>
<dbReference type="HOGENOM" id="CLU_065898_2_2_6"/>
<dbReference type="OrthoDB" id="9809045at2"/>
<dbReference type="Proteomes" id="UP000000239">
    <property type="component" value="Chromosome"/>
</dbReference>
<dbReference type="GO" id="GO:0015935">
    <property type="term" value="C:small ribosomal subunit"/>
    <property type="evidence" value="ECO:0007669"/>
    <property type="project" value="InterPro"/>
</dbReference>
<dbReference type="GO" id="GO:0019843">
    <property type="term" value="F:rRNA binding"/>
    <property type="evidence" value="ECO:0007669"/>
    <property type="project" value="UniProtKB-UniRule"/>
</dbReference>
<dbReference type="GO" id="GO:0003735">
    <property type="term" value="F:structural constituent of ribosome"/>
    <property type="evidence" value="ECO:0007669"/>
    <property type="project" value="InterPro"/>
</dbReference>
<dbReference type="GO" id="GO:0006412">
    <property type="term" value="P:translation"/>
    <property type="evidence" value="ECO:0007669"/>
    <property type="project" value="UniProtKB-UniRule"/>
</dbReference>
<dbReference type="FunFam" id="3.30.160.20:FF:000001">
    <property type="entry name" value="30S ribosomal protein S5"/>
    <property type="match status" value="1"/>
</dbReference>
<dbReference type="FunFam" id="3.30.230.10:FF:000002">
    <property type="entry name" value="30S ribosomal protein S5"/>
    <property type="match status" value="1"/>
</dbReference>
<dbReference type="Gene3D" id="3.30.160.20">
    <property type="match status" value="1"/>
</dbReference>
<dbReference type="Gene3D" id="3.30.230.10">
    <property type="match status" value="1"/>
</dbReference>
<dbReference type="HAMAP" id="MF_01307_B">
    <property type="entry name" value="Ribosomal_uS5_B"/>
    <property type="match status" value="1"/>
</dbReference>
<dbReference type="InterPro" id="IPR020568">
    <property type="entry name" value="Ribosomal_Su5_D2-typ_SF"/>
</dbReference>
<dbReference type="InterPro" id="IPR000851">
    <property type="entry name" value="Ribosomal_uS5"/>
</dbReference>
<dbReference type="InterPro" id="IPR005712">
    <property type="entry name" value="Ribosomal_uS5_bac-type"/>
</dbReference>
<dbReference type="InterPro" id="IPR005324">
    <property type="entry name" value="Ribosomal_uS5_C"/>
</dbReference>
<dbReference type="InterPro" id="IPR013810">
    <property type="entry name" value="Ribosomal_uS5_N"/>
</dbReference>
<dbReference type="InterPro" id="IPR018192">
    <property type="entry name" value="Ribosomal_uS5_N_CS"/>
</dbReference>
<dbReference type="InterPro" id="IPR014721">
    <property type="entry name" value="Ribsml_uS5_D2-typ_fold_subgr"/>
</dbReference>
<dbReference type="NCBIfam" id="TIGR01021">
    <property type="entry name" value="rpsE_bact"/>
    <property type="match status" value="1"/>
</dbReference>
<dbReference type="PANTHER" id="PTHR48277">
    <property type="entry name" value="MITOCHONDRIAL RIBOSOMAL PROTEIN S5"/>
    <property type="match status" value="1"/>
</dbReference>
<dbReference type="PANTHER" id="PTHR48277:SF1">
    <property type="entry name" value="MITOCHONDRIAL RIBOSOMAL PROTEIN S5"/>
    <property type="match status" value="1"/>
</dbReference>
<dbReference type="Pfam" id="PF00333">
    <property type="entry name" value="Ribosomal_S5"/>
    <property type="match status" value="1"/>
</dbReference>
<dbReference type="Pfam" id="PF03719">
    <property type="entry name" value="Ribosomal_S5_C"/>
    <property type="match status" value="1"/>
</dbReference>
<dbReference type="SUPFAM" id="SSF54768">
    <property type="entry name" value="dsRNA-binding domain-like"/>
    <property type="match status" value="1"/>
</dbReference>
<dbReference type="SUPFAM" id="SSF54211">
    <property type="entry name" value="Ribosomal protein S5 domain 2-like"/>
    <property type="match status" value="1"/>
</dbReference>
<dbReference type="PROSITE" id="PS00585">
    <property type="entry name" value="RIBOSOMAL_S5"/>
    <property type="match status" value="1"/>
</dbReference>
<dbReference type="PROSITE" id="PS50881">
    <property type="entry name" value="S5_DSRBD"/>
    <property type="match status" value="1"/>
</dbReference>
<feature type="chain" id="PRO_0000323105" description="Small ribosomal subunit protein uS5">
    <location>
        <begin position="1"/>
        <end position="166"/>
    </location>
</feature>
<feature type="domain" description="S5 DRBM" evidence="1">
    <location>
        <begin position="11"/>
        <end position="74"/>
    </location>
</feature>
<gene>
    <name evidence="1" type="primary">rpsE</name>
    <name type="ordered locus">Csal_0438</name>
</gene>
<proteinExistence type="inferred from homology"/>
<name>RS5_CHRSD</name>
<protein>
    <recommendedName>
        <fullName evidence="1">Small ribosomal subunit protein uS5</fullName>
    </recommendedName>
    <alternativeName>
        <fullName evidence="2">30S ribosomal protein S5</fullName>
    </alternativeName>
</protein>
<keyword id="KW-1185">Reference proteome</keyword>
<keyword id="KW-0687">Ribonucleoprotein</keyword>
<keyword id="KW-0689">Ribosomal protein</keyword>
<keyword id="KW-0694">RNA-binding</keyword>
<keyword id="KW-0699">rRNA-binding</keyword>
<sequence length="166" mass="17335">MANNEQKGGDLQEKLVQVNRVAKVVKGGRIFGFTALTVVGDGSGRVGFGRGKAREVPVAIQKAMDQARRNMVKVSLSGATLQYPVKARHGASKVFMQPASEGTGIIAGGAMRSVLELAGVHDVLAKCYGSTNPVNVVRATIKGLASMQSPEDIAAKRGMSVEEIAG</sequence>
<organism>
    <name type="scientific">Chromohalobacter salexigens (strain ATCC BAA-138 / DSM 3043 / CIP 106854 / NCIMB 13768 / 1H11)</name>
    <dbReference type="NCBI Taxonomy" id="290398"/>
    <lineage>
        <taxon>Bacteria</taxon>
        <taxon>Pseudomonadati</taxon>
        <taxon>Pseudomonadota</taxon>
        <taxon>Gammaproteobacteria</taxon>
        <taxon>Oceanospirillales</taxon>
        <taxon>Halomonadaceae</taxon>
        <taxon>Chromohalobacter</taxon>
    </lineage>
</organism>
<accession>Q1R0F8</accession>
<comment type="function">
    <text evidence="1">With S4 and S12 plays an important role in translational accuracy.</text>
</comment>
<comment type="function">
    <text evidence="1">Located at the back of the 30S subunit body where it stabilizes the conformation of the head with respect to the body.</text>
</comment>
<comment type="subunit">
    <text evidence="1">Part of the 30S ribosomal subunit. Contacts proteins S4 and S8.</text>
</comment>
<comment type="domain">
    <text>The N-terminal domain interacts with the head of the 30S subunit; the C-terminal domain interacts with the body and contacts protein S4. The interaction surface between S4 and S5 is involved in control of translational fidelity.</text>
</comment>
<comment type="similarity">
    <text evidence="1">Belongs to the universal ribosomal protein uS5 family.</text>
</comment>
<evidence type="ECO:0000255" key="1">
    <source>
        <dbReference type="HAMAP-Rule" id="MF_01307"/>
    </source>
</evidence>
<evidence type="ECO:0000305" key="2"/>